<accession>C0H3R5</accession>
<proteinExistence type="evidence at transcript level"/>
<reference key="1">
    <citation type="journal article" date="1997" name="Nature">
        <title>The complete genome sequence of the Gram-positive bacterium Bacillus subtilis.</title>
        <authorList>
            <person name="Kunst F."/>
            <person name="Ogasawara N."/>
            <person name="Moszer I."/>
            <person name="Albertini A.M."/>
            <person name="Alloni G."/>
            <person name="Azevedo V."/>
            <person name="Bertero M.G."/>
            <person name="Bessieres P."/>
            <person name="Bolotin A."/>
            <person name="Borchert S."/>
            <person name="Borriss R."/>
            <person name="Boursier L."/>
            <person name="Brans A."/>
            <person name="Braun M."/>
            <person name="Brignell S.C."/>
            <person name="Bron S."/>
            <person name="Brouillet S."/>
            <person name="Bruschi C.V."/>
            <person name="Caldwell B."/>
            <person name="Capuano V."/>
            <person name="Carter N.M."/>
            <person name="Choi S.-K."/>
            <person name="Codani J.-J."/>
            <person name="Connerton I.F."/>
            <person name="Cummings N.J."/>
            <person name="Daniel R.A."/>
            <person name="Denizot F."/>
            <person name="Devine K.M."/>
            <person name="Duesterhoeft A."/>
            <person name="Ehrlich S.D."/>
            <person name="Emmerson P.T."/>
            <person name="Entian K.-D."/>
            <person name="Errington J."/>
            <person name="Fabret C."/>
            <person name="Ferrari E."/>
            <person name="Foulger D."/>
            <person name="Fritz C."/>
            <person name="Fujita M."/>
            <person name="Fujita Y."/>
            <person name="Fuma S."/>
            <person name="Galizzi A."/>
            <person name="Galleron N."/>
            <person name="Ghim S.-Y."/>
            <person name="Glaser P."/>
            <person name="Goffeau A."/>
            <person name="Golightly E.J."/>
            <person name="Grandi G."/>
            <person name="Guiseppi G."/>
            <person name="Guy B.J."/>
            <person name="Haga K."/>
            <person name="Haiech J."/>
            <person name="Harwood C.R."/>
            <person name="Henaut A."/>
            <person name="Hilbert H."/>
            <person name="Holsappel S."/>
            <person name="Hosono S."/>
            <person name="Hullo M.-F."/>
            <person name="Itaya M."/>
            <person name="Jones L.-M."/>
            <person name="Joris B."/>
            <person name="Karamata D."/>
            <person name="Kasahara Y."/>
            <person name="Klaerr-Blanchard M."/>
            <person name="Klein C."/>
            <person name="Kobayashi Y."/>
            <person name="Koetter P."/>
            <person name="Koningstein G."/>
            <person name="Krogh S."/>
            <person name="Kumano M."/>
            <person name="Kurita K."/>
            <person name="Lapidus A."/>
            <person name="Lardinois S."/>
            <person name="Lauber J."/>
            <person name="Lazarevic V."/>
            <person name="Lee S.-M."/>
            <person name="Levine A."/>
            <person name="Liu H."/>
            <person name="Masuda S."/>
            <person name="Mauel C."/>
            <person name="Medigue C."/>
            <person name="Medina N."/>
            <person name="Mellado R.P."/>
            <person name="Mizuno M."/>
            <person name="Moestl D."/>
            <person name="Nakai S."/>
            <person name="Noback M."/>
            <person name="Noone D."/>
            <person name="O'Reilly M."/>
            <person name="Ogawa K."/>
            <person name="Ogiwara A."/>
            <person name="Oudega B."/>
            <person name="Park S.-H."/>
            <person name="Parro V."/>
            <person name="Pohl T.M."/>
            <person name="Portetelle D."/>
            <person name="Porwollik S."/>
            <person name="Prescott A.M."/>
            <person name="Presecan E."/>
            <person name="Pujic P."/>
            <person name="Purnelle B."/>
            <person name="Rapoport G."/>
            <person name="Rey M."/>
            <person name="Reynolds S."/>
            <person name="Rieger M."/>
            <person name="Rivolta C."/>
            <person name="Rocha E."/>
            <person name="Roche B."/>
            <person name="Rose M."/>
            <person name="Sadaie Y."/>
            <person name="Sato T."/>
            <person name="Scanlan E."/>
            <person name="Schleich S."/>
            <person name="Schroeter R."/>
            <person name="Scoffone F."/>
            <person name="Sekiguchi J."/>
            <person name="Sekowska A."/>
            <person name="Seror S.J."/>
            <person name="Serror P."/>
            <person name="Shin B.-S."/>
            <person name="Soldo B."/>
            <person name="Sorokin A."/>
            <person name="Tacconi E."/>
            <person name="Takagi T."/>
            <person name="Takahashi H."/>
            <person name="Takemaru K."/>
            <person name="Takeuchi M."/>
            <person name="Tamakoshi A."/>
            <person name="Tanaka T."/>
            <person name="Terpstra P."/>
            <person name="Tognoni A."/>
            <person name="Tosato V."/>
            <person name="Uchiyama S."/>
            <person name="Vandenbol M."/>
            <person name="Vannier F."/>
            <person name="Vassarotti A."/>
            <person name="Viari A."/>
            <person name="Wambutt R."/>
            <person name="Wedler E."/>
            <person name="Wedler H."/>
            <person name="Weitzenegger T."/>
            <person name="Winters P."/>
            <person name="Wipat A."/>
            <person name="Yamamoto H."/>
            <person name="Yamane K."/>
            <person name="Yasumoto K."/>
            <person name="Yata K."/>
            <person name="Yoshida K."/>
            <person name="Yoshikawa H.-F."/>
            <person name="Zumstein E."/>
            <person name="Yoshikawa H."/>
            <person name="Danchin A."/>
        </authorList>
    </citation>
    <scope>NUCLEOTIDE SEQUENCE [LARGE SCALE GENOMIC DNA]</scope>
    <source>
        <strain>168</strain>
    </source>
</reference>
<reference key="2">
    <citation type="journal article" date="2008" name="Mol. Microbiol.">
        <title>A previously unidentified sigma factor and two accessory proteins regulate oxalate decarboxylase expression in Bacillus subtilis.</title>
        <authorList>
            <person name="MacLellan S.R."/>
            <person name="Wecke T."/>
            <person name="Helmann J.D."/>
        </authorList>
    </citation>
    <scope>INDUCTION</scope>
    <source>
        <strain>168 / CU1065</strain>
    </source>
</reference>
<gene>
    <name type="primary">yvrJ</name>
    <name type="ordered locus">BSU33239</name>
</gene>
<dbReference type="EMBL" id="AL009126">
    <property type="protein sequence ID" value="CAX52694.1"/>
    <property type="molecule type" value="Genomic_DNA"/>
</dbReference>
<dbReference type="RefSeq" id="WP_010886612.1">
    <property type="nucleotide sequence ID" value="NC_000964.3"/>
</dbReference>
<dbReference type="RefSeq" id="YP_003097788.1">
    <property type="nucleotide sequence ID" value="NC_000964.3"/>
</dbReference>
<dbReference type="SMR" id="C0H3R5"/>
<dbReference type="STRING" id="224308.BSU33239"/>
<dbReference type="PaxDb" id="224308-BSU33239"/>
<dbReference type="EnsemblBacteria" id="CAX52694">
    <property type="protein sequence ID" value="CAX52694"/>
    <property type="gene ID" value="BSU_33239"/>
</dbReference>
<dbReference type="GeneID" id="8303113"/>
<dbReference type="KEGG" id="bsu:BSU33239"/>
<dbReference type="PATRIC" id="fig|224308.43.peg.3484"/>
<dbReference type="eggNOG" id="ENOG5030DIK">
    <property type="taxonomic scope" value="Bacteria"/>
</dbReference>
<dbReference type="InParanoid" id="C0H3R5"/>
<dbReference type="OrthoDB" id="2662123at2"/>
<dbReference type="BioCyc" id="BSUB:BSU33239-MONOMER"/>
<dbReference type="Proteomes" id="UP000001570">
    <property type="component" value="Chromosome"/>
</dbReference>
<dbReference type="InterPro" id="IPR024419">
    <property type="entry name" value="YvrJ"/>
</dbReference>
<dbReference type="Pfam" id="PF12841">
    <property type="entry name" value="YvrJ"/>
    <property type="match status" value="1"/>
</dbReference>
<protein>
    <recommendedName>
        <fullName>Uncharacterized protein YvrJ</fullName>
    </recommendedName>
</protein>
<keyword id="KW-1185">Reference proteome</keyword>
<feature type="chain" id="PRO_0000378489" description="Uncharacterized protein YvrJ">
    <location>
        <begin position="1"/>
        <end position="112"/>
    </location>
</feature>
<evidence type="ECO:0000269" key="1">
    <source>
    </source>
</evidence>
<organism>
    <name type="scientific">Bacillus subtilis (strain 168)</name>
    <dbReference type="NCBI Taxonomy" id="224308"/>
    <lineage>
        <taxon>Bacteria</taxon>
        <taxon>Bacillati</taxon>
        <taxon>Bacillota</taxon>
        <taxon>Bacilli</taxon>
        <taxon>Bacillales</taxon>
        <taxon>Bacillaceae</taxon>
        <taxon>Bacillus</taxon>
    </lineage>
</organism>
<sequence>MTVKDFDSPSNRLPTKLNEGKQKKVNYYFPPSVFQNTLQQFTFYRFSSLTYMTAEKEGRYFPMDQVFIEEVVKQIGNLGFPALIAMYLLTRFEKKFDQLIELMTELKDHAKK</sequence>
<name>YVRJ_BACSU</name>
<comment type="induction">
    <text evidence="1">Positively regulated by SigO and its coactivator RsoA.</text>
</comment>